<evidence type="ECO:0000255" key="1"/>
<evidence type="ECO:0000305" key="2"/>
<sequence length="568" mass="65679">MMRRLVSYFVRSRFSLHLSTTPPQRSALFSHILSSHLDSIQINKKISSFSVHRFCSTTLLNPELEITRIEKVSEDQSLVYCNENDIRTKGSNHAVGILHEAIMANLNAYDDMEKALDESSVDLTTPVVCKILQRLQYEEKTAFRFFTWAGHQEHYSHEPIAYNEMIDILSSTKYKNKQFRIVIDMLDYMKRNNKTVVLVDVLLEILRKYCERYLTHVQKFAKRKRIRVKTQPEINAFNMLLDALCKCGLVKEGEALLRRMRHRVKPDANTFNVLFFGWCRVRDPKKAMKLLEEMIEAGHKPENFTYCAAIDTFCQAGMVDEAADLFDFMITKGSAVSAPTAKTFALMIVALAKNDKAEECFELIGRMISTGCLPDVSTYKDVIEGMCMAEKVDEAYKFLDEMSNKGYPPDIVTYNCFLRVLCENRKTDEALKLYGRMVESRCAPSVQTYNMLISMFFEMDDPDGAFNTWTEMDKRDCVQDVETYCAMINGLFDCHRAKEACFLLEEVVNKGLKLPYRVFDSFLMRLSEVGNLKAIHKVSEHMKKFYNHSMARRFALSEKRKSTKLRGK</sequence>
<dbReference type="EMBL" id="AC012396">
    <property type="protein sequence ID" value="AAG30989.1"/>
    <property type="status" value="ALT_INIT"/>
    <property type="molecule type" value="Genomic_DNA"/>
</dbReference>
<dbReference type="EMBL" id="CP002684">
    <property type="protein sequence ID" value="AEE35457.1"/>
    <property type="molecule type" value="Genomic_DNA"/>
</dbReference>
<dbReference type="PIR" id="F96760">
    <property type="entry name" value="F96760"/>
</dbReference>
<dbReference type="RefSeq" id="NP_177483.2">
    <property type="nucleotide sequence ID" value="NM_106000.3"/>
</dbReference>
<dbReference type="SMR" id="Q9FX35"/>
<dbReference type="FunCoup" id="Q9FX35">
    <property type="interactions" value="529"/>
</dbReference>
<dbReference type="STRING" id="3702.Q9FX35"/>
<dbReference type="iPTMnet" id="Q9FX35"/>
<dbReference type="PaxDb" id="3702-AT1G73400.1"/>
<dbReference type="ProteomicsDB" id="249401"/>
<dbReference type="EnsemblPlants" id="AT1G73400.1">
    <property type="protein sequence ID" value="AT1G73400.1"/>
    <property type="gene ID" value="AT1G73400"/>
</dbReference>
<dbReference type="GeneID" id="843675"/>
<dbReference type="Gramene" id="AT1G73400.1">
    <property type="protein sequence ID" value="AT1G73400.1"/>
    <property type="gene ID" value="AT1G73400"/>
</dbReference>
<dbReference type="KEGG" id="ath:AT1G73400"/>
<dbReference type="Araport" id="AT1G73400"/>
<dbReference type="TAIR" id="AT1G73400"/>
<dbReference type="eggNOG" id="KOG4197">
    <property type="taxonomic scope" value="Eukaryota"/>
</dbReference>
<dbReference type="HOGENOM" id="CLU_002706_49_20_1"/>
<dbReference type="InParanoid" id="Q9FX35"/>
<dbReference type="OMA" id="QENYSHE"/>
<dbReference type="PhylomeDB" id="Q9FX35"/>
<dbReference type="PRO" id="PR:Q9FX35"/>
<dbReference type="Proteomes" id="UP000006548">
    <property type="component" value="Chromosome 1"/>
</dbReference>
<dbReference type="ExpressionAtlas" id="Q9FX35">
    <property type="expression patterns" value="baseline and differential"/>
</dbReference>
<dbReference type="GO" id="GO:0005739">
    <property type="term" value="C:mitochondrion"/>
    <property type="evidence" value="ECO:0007669"/>
    <property type="project" value="UniProtKB-SubCell"/>
</dbReference>
<dbReference type="Gene3D" id="1.25.40.10">
    <property type="entry name" value="Tetratricopeptide repeat domain"/>
    <property type="match status" value="4"/>
</dbReference>
<dbReference type="InterPro" id="IPR002885">
    <property type="entry name" value="Pentatricopeptide_rpt"/>
</dbReference>
<dbReference type="InterPro" id="IPR011990">
    <property type="entry name" value="TPR-like_helical_dom_sf"/>
</dbReference>
<dbReference type="NCBIfam" id="TIGR00756">
    <property type="entry name" value="PPR"/>
    <property type="match status" value="7"/>
</dbReference>
<dbReference type="PANTHER" id="PTHR47941">
    <property type="entry name" value="PENTATRICOPEPTIDE REPEAT-CONTAINING PROTEIN 3, MITOCHONDRIAL"/>
    <property type="match status" value="1"/>
</dbReference>
<dbReference type="Pfam" id="PF01535">
    <property type="entry name" value="PPR"/>
    <property type="match status" value="1"/>
</dbReference>
<dbReference type="Pfam" id="PF12854">
    <property type="entry name" value="PPR_1"/>
    <property type="match status" value="2"/>
</dbReference>
<dbReference type="Pfam" id="PF13041">
    <property type="entry name" value="PPR_2"/>
    <property type="match status" value="2"/>
</dbReference>
<dbReference type="PROSITE" id="PS51375">
    <property type="entry name" value="PPR"/>
    <property type="match status" value="9"/>
</dbReference>
<accession>Q9FX35</accession>
<comment type="subcellular location">
    <subcellularLocation>
        <location evidence="2">Mitochondrion</location>
    </subcellularLocation>
</comment>
<comment type="similarity">
    <text evidence="2">Belongs to the PPR family. P subfamily.</text>
</comment>
<comment type="sequence caution" evidence="2">
    <conflict type="erroneous initiation">
        <sequence resource="EMBL-CDS" id="AAG30989"/>
    </conflict>
</comment>
<comment type="online information" name="Pentatricopeptide repeat proteins">
    <link uri="https://ppr.plantenergy.uwa.edu.au"/>
</comment>
<organism>
    <name type="scientific">Arabidopsis thaliana</name>
    <name type="common">Mouse-ear cress</name>
    <dbReference type="NCBI Taxonomy" id="3702"/>
    <lineage>
        <taxon>Eukaryota</taxon>
        <taxon>Viridiplantae</taxon>
        <taxon>Streptophyta</taxon>
        <taxon>Embryophyta</taxon>
        <taxon>Tracheophyta</taxon>
        <taxon>Spermatophyta</taxon>
        <taxon>Magnoliopsida</taxon>
        <taxon>eudicotyledons</taxon>
        <taxon>Gunneridae</taxon>
        <taxon>Pentapetalae</taxon>
        <taxon>rosids</taxon>
        <taxon>malvids</taxon>
        <taxon>Brassicales</taxon>
        <taxon>Brassicaceae</taxon>
        <taxon>Camelineae</taxon>
        <taxon>Arabidopsis</taxon>
    </lineage>
</organism>
<proteinExistence type="evidence at transcript level"/>
<gene>
    <name type="ordered locus">At1g73400</name>
    <name type="ORF">T9L24.39</name>
</gene>
<feature type="transit peptide" description="Mitochondrion" evidence="1">
    <location>
        <begin position="1"/>
        <end position="55"/>
    </location>
</feature>
<feature type="chain" id="PRO_0000342858" description="Pentatricopeptide repeat-containing protein At1g73400, mitochondrial">
    <location>
        <begin position="56"/>
        <end position="568"/>
    </location>
</feature>
<feature type="repeat" description="PPR 1">
    <location>
        <begin position="233"/>
        <end position="263"/>
    </location>
</feature>
<feature type="repeat" description="PPR 2">
    <location>
        <begin position="267"/>
        <end position="301"/>
    </location>
</feature>
<feature type="repeat" description="PPR 3">
    <location>
        <begin position="302"/>
        <end position="336"/>
    </location>
</feature>
<feature type="repeat" description="PPR 4">
    <location>
        <begin position="340"/>
        <end position="374"/>
    </location>
</feature>
<feature type="repeat" description="PPR 5">
    <location>
        <begin position="375"/>
        <end position="409"/>
    </location>
</feature>
<feature type="repeat" description="PPR 6">
    <location>
        <begin position="410"/>
        <end position="444"/>
    </location>
</feature>
<feature type="repeat" description="PPR 7">
    <location>
        <begin position="445"/>
        <end position="479"/>
    </location>
</feature>
<feature type="repeat" description="PPR 8">
    <location>
        <begin position="480"/>
        <end position="514"/>
    </location>
</feature>
<keyword id="KW-0496">Mitochondrion</keyword>
<keyword id="KW-1185">Reference proteome</keyword>
<keyword id="KW-0677">Repeat</keyword>
<keyword id="KW-0809">Transit peptide</keyword>
<protein>
    <recommendedName>
        <fullName>Pentatricopeptide repeat-containing protein At1g73400, mitochondrial</fullName>
    </recommendedName>
</protein>
<name>PP117_ARATH</name>
<reference key="1">
    <citation type="journal article" date="2000" name="Nature">
        <title>Sequence and analysis of chromosome 1 of the plant Arabidopsis thaliana.</title>
        <authorList>
            <person name="Theologis A."/>
            <person name="Ecker J.R."/>
            <person name="Palm C.J."/>
            <person name="Federspiel N.A."/>
            <person name="Kaul S."/>
            <person name="White O."/>
            <person name="Alonso J."/>
            <person name="Altafi H."/>
            <person name="Araujo R."/>
            <person name="Bowman C.L."/>
            <person name="Brooks S.Y."/>
            <person name="Buehler E."/>
            <person name="Chan A."/>
            <person name="Chao Q."/>
            <person name="Chen H."/>
            <person name="Cheuk R.F."/>
            <person name="Chin C.W."/>
            <person name="Chung M.K."/>
            <person name="Conn L."/>
            <person name="Conway A.B."/>
            <person name="Conway A.R."/>
            <person name="Creasy T.H."/>
            <person name="Dewar K."/>
            <person name="Dunn P."/>
            <person name="Etgu P."/>
            <person name="Feldblyum T.V."/>
            <person name="Feng J.-D."/>
            <person name="Fong B."/>
            <person name="Fujii C.Y."/>
            <person name="Gill J.E."/>
            <person name="Goldsmith A.D."/>
            <person name="Haas B."/>
            <person name="Hansen N.F."/>
            <person name="Hughes B."/>
            <person name="Huizar L."/>
            <person name="Hunter J.L."/>
            <person name="Jenkins J."/>
            <person name="Johnson-Hopson C."/>
            <person name="Khan S."/>
            <person name="Khaykin E."/>
            <person name="Kim C.J."/>
            <person name="Koo H.L."/>
            <person name="Kremenetskaia I."/>
            <person name="Kurtz D.B."/>
            <person name="Kwan A."/>
            <person name="Lam B."/>
            <person name="Langin-Hooper S."/>
            <person name="Lee A."/>
            <person name="Lee J.M."/>
            <person name="Lenz C.A."/>
            <person name="Li J.H."/>
            <person name="Li Y.-P."/>
            <person name="Lin X."/>
            <person name="Liu S.X."/>
            <person name="Liu Z.A."/>
            <person name="Luros J.S."/>
            <person name="Maiti R."/>
            <person name="Marziali A."/>
            <person name="Militscher J."/>
            <person name="Miranda M."/>
            <person name="Nguyen M."/>
            <person name="Nierman W.C."/>
            <person name="Osborne B.I."/>
            <person name="Pai G."/>
            <person name="Peterson J."/>
            <person name="Pham P.K."/>
            <person name="Rizzo M."/>
            <person name="Rooney T."/>
            <person name="Rowley D."/>
            <person name="Sakano H."/>
            <person name="Salzberg S.L."/>
            <person name="Schwartz J.R."/>
            <person name="Shinn P."/>
            <person name="Southwick A.M."/>
            <person name="Sun H."/>
            <person name="Tallon L.J."/>
            <person name="Tambunga G."/>
            <person name="Toriumi M.J."/>
            <person name="Town C.D."/>
            <person name="Utterback T."/>
            <person name="Van Aken S."/>
            <person name="Vaysberg M."/>
            <person name="Vysotskaia V.S."/>
            <person name="Walker M."/>
            <person name="Wu D."/>
            <person name="Yu G."/>
            <person name="Fraser C.M."/>
            <person name="Venter J.C."/>
            <person name="Davis R.W."/>
        </authorList>
    </citation>
    <scope>NUCLEOTIDE SEQUENCE [LARGE SCALE GENOMIC DNA]</scope>
    <source>
        <strain>cv. Columbia</strain>
    </source>
</reference>
<reference key="2">
    <citation type="journal article" date="2017" name="Plant J.">
        <title>Araport11: a complete reannotation of the Arabidopsis thaliana reference genome.</title>
        <authorList>
            <person name="Cheng C.Y."/>
            <person name="Krishnakumar V."/>
            <person name="Chan A.P."/>
            <person name="Thibaud-Nissen F."/>
            <person name="Schobel S."/>
            <person name="Town C.D."/>
        </authorList>
    </citation>
    <scope>GENOME REANNOTATION</scope>
    <source>
        <strain>cv. Columbia</strain>
    </source>
</reference>
<reference key="3">
    <citation type="journal article" date="2004" name="Plant Cell">
        <title>Genome-wide analysis of Arabidopsis pentatricopeptide repeat proteins reveals their essential role in organelle biogenesis.</title>
        <authorList>
            <person name="Lurin C."/>
            <person name="Andres C."/>
            <person name="Aubourg S."/>
            <person name="Bellaoui M."/>
            <person name="Bitton F."/>
            <person name="Bruyere C."/>
            <person name="Caboche M."/>
            <person name="Debast C."/>
            <person name="Gualberto J."/>
            <person name="Hoffmann B."/>
            <person name="Lecharny A."/>
            <person name="Le Ret M."/>
            <person name="Martin-Magniette M.-L."/>
            <person name="Mireau H."/>
            <person name="Peeters N."/>
            <person name="Renou J.-P."/>
            <person name="Szurek B."/>
            <person name="Taconnat L."/>
            <person name="Small I."/>
        </authorList>
    </citation>
    <scope>GENE FAMILY</scope>
</reference>